<gene>
    <name evidence="1" type="primary">petG</name>
</gene>
<reference key="1">
    <citation type="journal article" date="2005" name="DNA Res.">
        <title>Complete nucleotide sequence of the chloroplast genome from the Tasmanian blue gum, Eucalyptus globulus (Myrtaceae).</title>
        <authorList>
            <person name="Steane D.A."/>
        </authorList>
    </citation>
    <scope>NUCLEOTIDE SEQUENCE [LARGE SCALE GENOMIC DNA]</scope>
</reference>
<organism>
    <name type="scientific">Eucalyptus globulus subsp. globulus</name>
    <name type="common">Tasmanian blue gum</name>
    <dbReference type="NCBI Taxonomy" id="71271"/>
    <lineage>
        <taxon>Eukaryota</taxon>
        <taxon>Viridiplantae</taxon>
        <taxon>Streptophyta</taxon>
        <taxon>Embryophyta</taxon>
        <taxon>Tracheophyta</taxon>
        <taxon>Spermatophyta</taxon>
        <taxon>Magnoliopsida</taxon>
        <taxon>eudicotyledons</taxon>
        <taxon>Gunneridae</taxon>
        <taxon>Pentapetalae</taxon>
        <taxon>rosids</taxon>
        <taxon>malvids</taxon>
        <taxon>Myrtales</taxon>
        <taxon>Myrtaceae</taxon>
        <taxon>Myrtoideae</taxon>
        <taxon>Eucalypteae</taxon>
        <taxon>Eucalyptus</taxon>
    </lineage>
</organism>
<feature type="chain" id="PRO_0000275488" description="Cytochrome b6-f complex subunit 5">
    <location>
        <begin position="1"/>
        <end position="37"/>
    </location>
</feature>
<feature type="transmembrane region" description="Helical" evidence="1">
    <location>
        <begin position="5"/>
        <end position="25"/>
    </location>
</feature>
<evidence type="ECO:0000255" key="1">
    <source>
        <dbReference type="HAMAP-Rule" id="MF_00432"/>
    </source>
</evidence>
<sequence>MIEVFLFGIVLGLIPITLAGLFVTAYLQYRRGDQLDL</sequence>
<protein>
    <recommendedName>
        <fullName evidence="1">Cytochrome b6-f complex subunit 5</fullName>
    </recommendedName>
    <alternativeName>
        <fullName evidence="1">Cytochrome b6-f complex subunit PetG</fullName>
    </alternativeName>
    <alternativeName>
        <fullName evidence="1">Cytochrome b6-f complex subunit V</fullName>
    </alternativeName>
</protein>
<accession>Q49KY0</accession>
<geneLocation type="chloroplast"/>
<dbReference type="EMBL" id="AY780259">
    <property type="protein sequence ID" value="AAX21047.1"/>
    <property type="molecule type" value="Genomic_DNA"/>
</dbReference>
<dbReference type="RefSeq" id="YP_636317.1">
    <property type="nucleotide sequence ID" value="NC_008115.1"/>
</dbReference>
<dbReference type="SMR" id="Q49KY0"/>
<dbReference type="GeneID" id="4108401"/>
<dbReference type="GO" id="GO:0009535">
    <property type="term" value="C:chloroplast thylakoid membrane"/>
    <property type="evidence" value="ECO:0007669"/>
    <property type="project" value="UniProtKB-SubCell"/>
</dbReference>
<dbReference type="GO" id="GO:0009512">
    <property type="term" value="C:cytochrome b6f complex"/>
    <property type="evidence" value="ECO:0007669"/>
    <property type="project" value="InterPro"/>
</dbReference>
<dbReference type="GO" id="GO:0045158">
    <property type="term" value="F:electron transporter, transferring electrons within cytochrome b6/f complex of photosystem II activity"/>
    <property type="evidence" value="ECO:0007669"/>
    <property type="project" value="UniProtKB-UniRule"/>
</dbReference>
<dbReference type="GO" id="GO:0017004">
    <property type="term" value="P:cytochrome complex assembly"/>
    <property type="evidence" value="ECO:0007669"/>
    <property type="project" value="UniProtKB-UniRule"/>
</dbReference>
<dbReference type="GO" id="GO:0015979">
    <property type="term" value="P:photosynthesis"/>
    <property type="evidence" value="ECO:0007669"/>
    <property type="project" value="UniProtKB-KW"/>
</dbReference>
<dbReference type="HAMAP" id="MF_00432">
    <property type="entry name" value="Cytb6_f_PetG"/>
    <property type="match status" value="1"/>
</dbReference>
<dbReference type="InterPro" id="IPR003683">
    <property type="entry name" value="Cyt_6/f_cplx_su5"/>
</dbReference>
<dbReference type="InterPro" id="IPR036099">
    <property type="entry name" value="Cyt_6/f_cplx_su5_sf"/>
</dbReference>
<dbReference type="NCBIfam" id="NF001907">
    <property type="entry name" value="PRK00665.1"/>
    <property type="match status" value="1"/>
</dbReference>
<dbReference type="Pfam" id="PF02529">
    <property type="entry name" value="PetG"/>
    <property type="match status" value="1"/>
</dbReference>
<dbReference type="PIRSF" id="PIRSF000034">
    <property type="entry name" value="Cyt_b6-f_V"/>
    <property type="match status" value="1"/>
</dbReference>
<dbReference type="SUPFAM" id="SSF103446">
    <property type="entry name" value="PetG subunit of the cytochrome b6f complex"/>
    <property type="match status" value="1"/>
</dbReference>
<proteinExistence type="inferred from homology"/>
<name>PETG_EUCGG</name>
<keyword id="KW-0150">Chloroplast</keyword>
<keyword id="KW-0249">Electron transport</keyword>
<keyword id="KW-0472">Membrane</keyword>
<keyword id="KW-0602">Photosynthesis</keyword>
<keyword id="KW-0934">Plastid</keyword>
<keyword id="KW-0793">Thylakoid</keyword>
<keyword id="KW-0812">Transmembrane</keyword>
<keyword id="KW-1133">Transmembrane helix</keyword>
<keyword id="KW-0813">Transport</keyword>
<comment type="function">
    <text evidence="1">Component of the cytochrome b6-f complex, which mediates electron transfer between photosystem II (PSII) and photosystem I (PSI), cyclic electron flow around PSI, and state transitions. PetG is required for either the stability or assembly of the cytochrome b6-f complex.</text>
</comment>
<comment type="subunit">
    <text evidence="1">The 4 large subunits of the cytochrome b6-f complex are cytochrome b6, subunit IV (17 kDa polypeptide, PetD), cytochrome f and the Rieske protein, while the 4 small subunits are PetG, PetL, PetM and PetN. The complex functions as a dimer.</text>
</comment>
<comment type="subcellular location">
    <subcellularLocation>
        <location evidence="1">Plastid</location>
        <location evidence="1">Chloroplast thylakoid membrane</location>
        <topology evidence="1">Single-pass membrane protein</topology>
    </subcellularLocation>
</comment>
<comment type="similarity">
    <text evidence="1">Belongs to the PetG family.</text>
</comment>